<comment type="function">
    <text evidence="1">Variant histones H2A are synthesized throughout the cell cycle and are very different from classical S-phase regulated H2A. May replace conventional H2A in a subset of nucleosomes. Nucleosomes wrap and compact DNA into chromatin, limiting DNA accessibility to the cellular machineries which require DNA as a template. Histones thereby play a central role in transcription regulation, DNA repair, DNA replication and chromosomal stability. DNA accessibility is regulated via a complex set of post-translational modifications of histones, also called histone code, and nucleosome remodeling (By similarity).</text>
</comment>
<comment type="subunit">
    <text>The nucleosome is a histone octamer containing two molecules each of H2A, H2B, H3 and H4 assembled in one H3-H4 heterotetramer and two H2A-H2B heterodimers. The octamer wraps approximately 147 bp of DNA.</text>
</comment>
<comment type="subcellular location">
    <subcellularLocation>
        <location evidence="1">Nucleus</location>
    </subcellularLocation>
    <subcellularLocation>
        <location evidence="1">Chromosome</location>
    </subcellularLocation>
</comment>
<comment type="similarity">
    <text evidence="3">Belongs to the histone H2A family.</text>
</comment>
<organism>
    <name type="scientific">Oryza sativa subsp. japonica</name>
    <name type="common">Rice</name>
    <dbReference type="NCBI Taxonomy" id="39947"/>
    <lineage>
        <taxon>Eukaryota</taxon>
        <taxon>Viridiplantae</taxon>
        <taxon>Streptophyta</taxon>
        <taxon>Embryophyta</taxon>
        <taxon>Tracheophyta</taxon>
        <taxon>Spermatophyta</taxon>
        <taxon>Magnoliopsida</taxon>
        <taxon>Liliopsida</taxon>
        <taxon>Poales</taxon>
        <taxon>Poaceae</taxon>
        <taxon>BOP clade</taxon>
        <taxon>Oryzoideae</taxon>
        <taxon>Oryzeae</taxon>
        <taxon>Oryzinae</taxon>
        <taxon>Oryza</taxon>
        <taxon>Oryza sativa</taxon>
    </lineage>
</organism>
<sequence>MAGKGGKGLLAAKTTAAKSAEKDKGKKAPVSRSSRAGLQFPVGRIHRQLKQRTQANGRVGATAAVYSAAILEYLTAEVLELAGNASKDLKVKRITPRHLQLAIRGDEELDTLIKGTIAGGGVIPHIHKSLINKSSKE</sequence>
<keyword id="KW-0158">Chromosome</keyword>
<keyword id="KW-0238">DNA-binding</keyword>
<keyword id="KW-0544">Nucleosome core</keyword>
<keyword id="KW-0539">Nucleus</keyword>
<keyword id="KW-1185">Reference proteome</keyword>
<dbReference type="EMBL" id="AC092558">
    <property type="protein sequence ID" value="AAP12995.1"/>
    <property type="molecule type" value="Genomic_DNA"/>
</dbReference>
<dbReference type="EMBL" id="AC096855">
    <property type="protein sequence ID" value="AAR87284.1"/>
    <property type="molecule type" value="Genomic_DNA"/>
</dbReference>
<dbReference type="EMBL" id="DP000009">
    <property type="protein sequence ID" value="ABF98814.1"/>
    <property type="molecule type" value="Genomic_DNA"/>
</dbReference>
<dbReference type="EMBL" id="DP000009">
    <property type="protein sequence ID" value="ABF98815.1"/>
    <property type="molecule type" value="Genomic_DNA"/>
</dbReference>
<dbReference type="EMBL" id="AP008209">
    <property type="protein sequence ID" value="BAF13146.1"/>
    <property type="molecule type" value="Genomic_DNA"/>
</dbReference>
<dbReference type="EMBL" id="AP014959">
    <property type="protein sequence ID" value="BAS86324.1"/>
    <property type="molecule type" value="Genomic_DNA"/>
</dbReference>
<dbReference type="EMBL" id="CM000140">
    <property type="protein sequence ID" value="EEE59908.1"/>
    <property type="molecule type" value="Genomic_DNA"/>
</dbReference>
<dbReference type="EMBL" id="AK120299">
    <property type="protein sequence ID" value="BAG99958.1"/>
    <property type="molecule type" value="mRNA"/>
</dbReference>
<dbReference type="RefSeq" id="XP_015630918.1">
    <property type="nucleotide sequence ID" value="XM_015775432.1"/>
</dbReference>
<dbReference type="RefSeq" id="XP_015630919.1">
    <property type="nucleotide sequence ID" value="XM_015775433.1"/>
</dbReference>
<dbReference type="SMR" id="Q84MP7"/>
<dbReference type="FunCoup" id="Q84MP7">
    <property type="interactions" value="2377"/>
</dbReference>
<dbReference type="STRING" id="39947.Q84MP7"/>
<dbReference type="PaxDb" id="39947-Q84MP7"/>
<dbReference type="EnsemblPlants" id="Os03t0743400-01">
    <property type="protein sequence ID" value="Os03t0743400-01"/>
    <property type="gene ID" value="Os03g0743400"/>
</dbReference>
<dbReference type="Gramene" id="Os03t0743400-01">
    <property type="protein sequence ID" value="Os03t0743400-01"/>
    <property type="gene ID" value="Os03g0743400"/>
</dbReference>
<dbReference type="KEGG" id="dosa:Os03g0743400"/>
<dbReference type="eggNOG" id="KOG1757">
    <property type="taxonomic scope" value="Eukaryota"/>
</dbReference>
<dbReference type="HOGENOM" id="CLU_062828_2_2_1"/>
<dbReference type="InParanoid" id="Q84MP7"/>
<dbReference type="OMA" id="SYSEPRA"/>
<dbReference type="OrthoDB" id="9421954at2759"/>
<dbReference type="Proteomes" id="UP000000763">
    <property type="component" value="Chromosome 3"/>
</dbReference>
<dbReference type="Proteomes" id="UP000007752">
    <property type="component" value="Chromosome 3"/>
</dbReference>
<dbReference type="Proteomes" id="UP000059680">
    <property type="component" value="Chromosome 3"/>
</dbReference>
<dbReference type="GO" id="GO:0000786">
    <property type="term" value="C:nucleosome"/>
    <property type="evidence" value="ECO:0000318"/>
    <property type="project" value="GO_Central"/>
</dbReference>
<dbReference type="GO" id="GO:0005634">
    <property type="term" value="C:nucleus"/>
    <property type="evidence" value="ECO:0000318"/>
    <property type="project" value="GO_Central"/>
</dbReference>
<dbReference type="GO" id="GO:0003677">
    <property type="term" value="F:DNA binding"/>
    <property type="evidence" value="ECO:0007669"/>
    <property type="project" value="UniProtKB-KW"/>
</dbReference>
<dbReference type="GO" id="GO:0046982">
    <property type="term" value="F:protein heterodimerization activity"/>
    <property type="evidence" value="ECO:0007669"/>
    <property type="project" value="InterPro"/>
</dbReference>
<dbReference type="GO" id="GO:0030527">
    <property type="term" value="F:structural constituent of chromatin"/>
    <property type="evidence" value="ECO:0000318"/>
    <property type="project" value="GO_Central"/>
</dbReference>
<dbReference type="GO" id="GO:0031507">
    <property type="term" value="P:heterochromatin formation"/>
    <property type="evidence" value="ECO:0000318"/>
    <property type="project" value="GO_Central"/>
</dbReference>
<dbReference type="CDD" id="cd00074">
    <property type="entry name" value="HFD_H2A"/>
    <property type="match status" value="1"/>
</dbReference>
<dbReference type="FunFam" id="1.10.20.10:FF:000005">
    <property type="entry name" value="Histone H2A"/>
    <property type="match status" value="1"/>
</dbReference>
<dbReference type="Gene3D" id="1.10.20.10">
    <property type="entry name" value="Histone, subunit A"/>
    <property type="match status" value="1"/>
</dbReference>
<dbReference type="InterPro" id="IPR009072">
    <property type="entry name" value="Histone-fold"/>
</dbReference>
<dbReference type="InterPro" id="IPR002119">
    <property type="entry name" value="Histone_H2A"/>
</dbReference>
<dbReference type="InterPro" id="IPR007125">
    <property type="entry name" value="Histone_H2A/H2B/H3"/>
</dbReference>
<dbReference type="InterPro" id="IPR032454">
    <property type="entry name" value="Histone_H2A_C"/>
</dbReference>
<dbReference type="InterPro" id="IPR032458">
    <property type="entry name" value="Histone_H2A_CS"/>
</dbReference>
<dbReference type="PANTHER" id="PTHR23430">
    <property type="entry name" value="HISTONE H2A"/>
    <property type="match status" value="1"/>
</dbReference>
<dbReference type="Pfam" id="PF00125">
    <property type="entry name" value="Histone"/>
    <property type="match status" value="1"/>
</dbReference>
<dbReference type="Pfam" id="PF16211">
    <property type="entry name" value="Histone_H2A_C"/>
    <property type="match status" value="1"/>
</dbReference>
<dbReference type="PRINTS" id="PR00620">
    <property type="entry name" value="HISTONEH2A"/>
</dbReference>
<dbReference type="SMART" id="SM00414">
    <property type="entry name" value="H2A"/>
    <property type="match status" value="1"/>
</dbReference>
<dbReference type="SUPFAM" id="SSF47113">
    <property type="entry name" value="Histone-fold"/>
    <property type="match status" value="1"/>
</dbReference>
<dbReference type="PROSITE" id="PS00046">
    <property type="entry name" value="HISTONE_H2A"/>
    <property type="match status" value="1"/>
</dbReference>
<accession>Q84MP7</accession>
<accession>Q10D30</accession>
<feature type="chain" id="PRO_0000055317" description="Probable histone H2A variant 3">
    <location>
        <begin position="1"/>
        <end position="137"/>
    </location>
</feature>
<feature type="region of interest" description="Disordered" evidence="2">
    <location>
        <begin position="1"/>
        <end position="45"/>
    </location>
</feature>
<feature type="compositionally biased region" description="Low complexity" evidence="2">
    <location>
        <begin position="9"/>
        <end position="18"/>
    </location>
</feature>
<evidence type="ECO:0000250" key="1"/>
<evidence type="ECO:0000256" key="2">
    <source>
        <dbReference type="SAM" id="MobiDB-lite"/>
    </source>
</evidence>
<evidence type="ECO:0000305" key="3"/>
<evidence type="ECO:0000312" key="4">
    <source>
        <dbReference type="EMBL" id="EEE59908.1"/>
    </source>
</evidence>
<protein>
    <recommendedName>
        <fullName>Probable histone H2A variant 3</fullName>
    </recommendedName>
</protein>
<name>H2AV3_ORYSJ</name>
<gene>
    <name type="ordered locus">Os03g0743400</name>
    <name type="ordered locus">LOC_Os03g53190</name>
    <name type="ORF">OJ1365_D05.1</name>
    <name evidence="4" type="ORF">OsJ_12526</name>
    <name type="ORF">OSJNBb0036F07.3</name>
</gene>
<reference key="1">
    <citation type="journal article" date="2005" name="Genome Res.">
        <title>Sequence, annotation, and analysis of synteny between rice chromosome 3 and diverged grass species.</title>
        <authorList>
            <consortium name="The rice chromosome 3 sequencing consortium"/>
            <person name="Buell C.R."/>
            <person name="Yuan Q."/>
            <person name="Ouyang S."/>
            <person name="Liu J."/>
            <person name="Zhu W."/>
            <person name="Wang A."/>
            <person name="Maiti R."/>
            <person name="Haas B."/>
            <person name="Wortman J."/>
            <person name="Pertea M."/>
            <person name="Jones K.M."/>
            <person name="Kim M."/>
            <person name="Overton L."/>
            <person name="Tsitrin T."/>
            <person name="Fadrosh D."/>
            <person name="Bera J."/>
            <person name="Weaver B."/>
            <person name="Jin S."/>
            <person name="Johri S."/>
            <person name="Reardon M."/>
            <person name="Webb K."/>
            <person name="Hill J."/>
            <person name="Moffat K."/>
            <person name="Tallon L."/>
            <person name="Van Aken S."/>
            <person name="Lewis M."/>
            <person name="Utterback T."/>
            <person name="Feldblyum T."/>
            <person name="Zismann V."/>
            <person name="Iobst S."/>
            <person name="Hsiao J."/>
            <person name="de Vazeille A.R."/>
            <person name="Salzberg S.L."/>
            <person name="White O."/>
            <person name="Fraser C.M."/>
            <person name="Yu Y."/>
            <person name="Kim H."/>
            <person name="Rambo T."/>
            <person name="Currie J."/>
            <person name="Collura K."/>
            <person name="Kernodle-Thompson S."/>
            <person name="Wei F."/>
            <person name="Kudrna K."/>
            <person name="Ammiraju J.S.S."/>
            <person name="Luo M."/>
            <person name="Goicoechea J.L."/>
            <person name="Wing R.A."/>
            <person name="Henry D."/>
            <person name="Oates R."/>
            <person name="Palmer M."/>
            <person name="Pries G."/>
            <person name="Saski C."/>
            <person name="Simmons J."/>
            <person name="Soderlund C."/>
            <person name="Nelson W."/>
            <person name="de la Bastide M."/>
            <person name="Spiegel L."/>
            <person name="Nascimento L."/>
            <person name="Huang E."/>
            <person name="Preston R."/>
            <person name="Zutavern T."/>
            <person name="Palmer L."/>
            <person name="O'Shaughnessy A."/>
            <person name="Dike S."/>
            <person name="McCombie W.R."/>
            <person name="Minx P."/>
            <person name="Cordum H."/>
            <person name="Wilson R."/>
            <person name="Jin W."/>
            <person name="Lee H.R."/>
            <person name="Jiang J."/>
            <person name="Jackson S."/>
        </authorList>
    </citation>
    <scope>NUCLEOTIDE SEQUENCE [LARGE SCALE GENOMIC DNA]</scope>
    <source>
        <strain>cv. Nipponbare</strain>
    </source>
</reference>
<reference key="2">
    <citation type="journal article" date="2005" name="Nature">
        <title>The map-based sequence of the rice genome.</title>
        <authorList>
            <consortium name="International rice genome sequencing project (IRGSP)"/>
        </authorList>
    </citation>
    <scope>NUCLEOTIDE SEQUENCE [LARGE SCALE GENOMIC DNA]</scope>
    <source>
        <strain>cv. Nipponbare</strain>
    </source>
</reference>
<reference key="3">
    <citation type="journal article" date="2008" name="Nucleic Acids Res.">
        <title>The rice annotation project database (RAP-DB): 2008 update.</title>
        <authorList>
            <consortium name="The rice annotation project (RAP)"/>
        </authorList>
    </citation>
    <scope>GENOME REANNOTATION</scope>
    <source>
        <strain>cv. Nipponbare</strain>
    </source>
</reference>
<reference key="4">
    <citation type="journal article" date="2013" name="Rice">
        <title>Improvement of the Oryza sativa Nipponbare reference genome using next generation sequence and optical map data.</title>
        <authorList>
            <person name="Kawahara Y."/>
            <person name="de la Bastide M."/>
            <person name="Hamilton J.P."/>
            <person name="Kanamori H."/>
            <person name="McCombie W.R."/>
            <person name="Ouyang S."/>
            <person name="Schwartz D.C."/>
            <person name="Tanaka T."/>
            <person name="Wu J."/>
            <person name="Zhou S."/>
            <person name="Childs K.L."/>
            <person name="Davidson R.M."/>
            <person name="Lin H."/>
            <person name="Quesada-Ocampo L."/>
            <person name="Vaillancourt B."/>
            <person name="Sakai H."/>
            <person name="Lee S.S."/>
            <person name="Kim J."/>
            <person name="Numa H."/>
            <person name="Itoh T."/>
            <person name="Buell C.R."/>
            <person name="Matsumoto T."/>
        </authorList>
    </citation>
    <scope>GENOME REANNOTATION</scope>
    <source>
        <strain>cv. Nipponbare</strain>
    </source>
</reference>
<reference key="5">
    <citation type="journal article" date="2005" name="PLoS Biol.">
        <title>The genomes of Oryza sativa: a history of duplications.</title>
        <authorList>
            <person name="Yu J."/>
            <person name="Wang J."/>
            <person name="Lin W."/>
            <person name="Li S."/>
            <person name="Li H."/>
            <person name="Zhou J."/>
            <person name="Ni P."/>
            <person name="Dong W."/>
            <person name="Hu S."/>
            <person name="Zeng C."/>
            <person name="Zhang J."/>
            <person name="Zhang Y."/>
            <person name="Li R."/>
            <person name="Xu Z."/>
            <person name="Li S."/>
            <person name="Li X."/>
            <person name="Zheng H."/>
            <person name="Cong L."/>
            <person name="Lin L."/>
            <person name="Yin J."/>
            <person name="Geng J."/>
            <person name="Li G."/>
            <person name="Shi J."/>
            <person name="Liu J."/>
            <person name="Lv H."/>
            <person name="Li J."/>
            <person name="Wang J."/>
            <person name="Deng Y."/>
            <person name="Ran L."/>
            <person name="Shi X."/>
            <person name="Wang X."/>
            <person name="Wu Q."/>
            <person name="Li C."/>
            <person name="Ren X."/>
            <person name="Wang J."/>
            <person name="Wang X."/>
            <person name="Li D."/>
            <person name="Liu D."/>
            <person name="Zhang X."/>
            <person name="Ji Z."/>
            <person name="Zhao W."/>
            <person name="Sun Y."/>
            <person name="Zhang Z."/>
            <person name="Bao J."/>
            <person name="Han Y."/>
            <person name="Dong L."/>
            <person name="Ji J."/>
            <person name="Chen P."/>
            <person name="Wu S."/>
            <person name="Liu J."/>
            <person name="Xiao Y."/>
            <person name="Bu D."/>
            <person name="Tan J."/>
            <person name="Yang L."/>
            <person name="Ye C."/>
            <person name="Zhang J."/>
            <person name="Xu J."/>
            <person name="Zhou Y."/>
            <person name="Yu Y."/>
            <person name="Zhang B."/>
            <person name="Zhuang S."/>
            <person name="Wei H."/>
            <person name="Liu B."/>
            <person name="Lei M."/>
            <person name="Yu H."/>
            <person name="Li Y."/>
            <person name="Xu H."/>
            <person name="Wei S."/>
            <person name="He X."/>
            <person name="Fang L."/>
            <person name="Zhang Z."/>
            <person name="Zhang Y."/>
            <person name="Huang X."/>
            <person name="Su Z."/>
            <person name="Tong W."/>
            <person name="Li J."/>
            <person name="Tong Z."/>
            <person name="Li S."/>
            <person name="Ye J."/>
            <person name="Wang L."/>
            <person name="Fang L."/>
            <person name="Lei T."/>
            <person name="Chen C.-S."/>
            <person name="Chen H.-C."/>
            <person name="Xu Z."/>
            <person name="Li H."/>
            <person name="Huang H."/>
            <person name="Zhang F."/>
            <person name="Xu H."/>
            <person name="Li N."/>
            <person name="Zhao C."/>
            <person name="Li S."/>
            <person name="Dong L."/>
            <person name="Huang Y."/>
            <person name="Li L."/>
            <person name="Xi Y."/>
            <person name="Qi Q."/>
            <person name="Li W."/>
            <person name="Zhang B."/>
            <person name="Hu W."/>
            <person name="Zhang Y."/>
            <person name="Tian X."/>
            <person name="Jiao Y."/>
            <person name="Liang X."/>
            <person name="Jin J."/>
            <person name="Gao L."/>
            <person name="Zheng W."/>
            <person name="Hao B."/>
            <person name="Liu S.-M."/>
            <person name="Wang W."/>
            <person name="Yuan L."/>
            <person name="Cao M."/>
            <person name="McDermott J."/>
            <person name="Samudrala R."/>
            <person name="Wang J."/>
            <person name="Wong G.K.-S."/>
            <person name="Yang H."/>
        </authorList>
    </citation>
    <scope>NUCLEOTIDE SEQUENCE [LARGE SCALE GENOMIC DNA]</scope>
    <source>
        <strain>cv. Nipponbare</strain>
    </source>
</reference>
<reference key="6">
    <citation type="journal article" date="2003" name="Science">
        <title>Collection, mapping, and annotation of over 28,000 cDNA clones from japonica rice.</title>
        <authorList>
            <consortium name="The rice full-length cDNA consortium"/>
        </authorList>
    </citation>
    <scope>NUCLEOTIDE SEQUENCE [LARGE SCALE MRNA]</scope>
    <source>
        <strain>cv. Nipponbare</strain>
    </source>
</reference>
<proteinExistence type="evidence at transcript level"/>